<accession>Q688S6</accession>
<accession>B9FNH8</accession>
<accession>Q25CI2</accession>
<name>YSL4_ORYSJ</name>
<proteinExistence type="evidence at transcript level"/>
<keyword id="KW-0472">Membrane</keyword>
<keyword id="KW-1185">Reference proteome</keyword>
<keyword id="KW-0812">Transmembrane</keyword>
<keyword id="KW-1133">Transmembrane helix</keyword>
<keyword id="KW-0813">Transport</keyword>
<gene>
    <name type="primary">YSL4</name>
    <name type="ordered locus">Os05g0252000</name>
    <name type="ordered locus">LOC_Os05g16290</name>
    <name evidence="4" type="ORF">OsJ_17816</name>
    <name type="ORF">OSJNBa0009N21.1</name>
</gene>
<comment type="function">
    <text evidence="1">May be involved in the transport of nicotianamine-chelated metals.</text>
</comment>
<comment type="subcellular location">
    <subcellularLocation>
        <location evidence="3">Membrane</location>
        <topology evidence="3">Multi-pass membrane protein</topology>
    </subcellularLocation>
</comment>
<comment type="similarity">
    <text evidence="3">Belongs to the YSL (TC 2.A.67.2) family.</text>
</comment>
<reference key="1">
    <citation type="journal article" date="2004" name="Plant J.">
        <title>OsYSL2 is a rice metal-nicotianamine transporter that is regulated by iron and expressed in the phloem.</title>
        <authorList>
            <person name="Koike S."/>
            <person name="Inoue H."/>
            <person name="Mizuno D."/>
            <person name="Takahashi M."/>
            <person name="Nakanishi H."/>
            <person name="Mori S."/>
            <person name="Nishizawa N.K."/>
        </authorList>
    </citation>
    <scope>NUCLEOTIDE SEQUENCE [MRNA]</scope>
    <scope>GENE FAMILY</scope>
    <scope>NOMENCLATURE</scope>
    <source>
        <strain>cv. Nipponbare</strain>
    </source>
</reference>
<reference key="2">
    <citation type="journal article" date="2005" name="Mol. Genet. Genomics">
        <title>A fine physical map of the rice chromosome 5.</title>
        <authorList>
            <person name="Cheng C.-H."/>
            <person name="Chung M.C."/>
            <person name="Liu S.-M."/>
            <person name="Chen S.-K."/>
            <person name="Kao F.Y."/>
            <person name="Lin S.-J."/>
            <person name="Hsiao S.-H."/>
            <person name="Tseng I.C."/>
            <person name="Hsing Y.-I.C."/>
            <person name="Wu H.-P."/>
            <person name="Chen C.-S."/>
            <person name="Shaw J.-F."/>
            <person name="Wu J."/>
            <person name="Matsumoto T."/>
            <person name="Sasaki T."/>
            <person name="Chen H.-C."/>
            <person name="Chow T.-Y."/>
        </authorList>
    </citation>
    <scope>NUCLEOTIDE SEQUENCE [LARGE SCALE GENOMIC DNA]</scope>
    <source>
        <strain>cv. Nipponbare</strain>
    </source>
</reference>
<reference key="3">
    <citation type="journal article" date="2005" name="Nature">
        <title>The map-based sequence of the rice genome.</title>
        <authorList>
            <consortium name="International rice genome sequencing project (IRGSP)"/>
        </authorList>
    </citation>
    <scope>NUCLEOTIDE SEQUENCE [LARGE SCALE GENOMIC DNA]</scope>
    <source>
        <strain>cv. Nipponbare</strain>
    </source>
</reference>
<reference key="4">
    <citation type="journal article" date="2008" name="Nucleic Acids Res.">
        <title>The rice annotation project database (RAP-DB): 2008 update.</title>
        <authorList>
            <consortium name="The rice annotation project (RAP)"/>
        </authorList>
    </citation>
    <scope>GENOME REANNOTATION</scope>
    <source>
        <strain>cv. Nipponbare</strain>
    </source>
</reference>
<reference key="5">
    <citation type="journal article" date="2013" name="Rice">
        <title>Improvement of the Oryza sativa Nipponbare reference genome using next generation sequence and optical map data.</title>
        <authorList>
            <person name="Kawahara Y."/>
            <person name="de la Bastide M."/>
            <person name="Hamilton J.P."/>
            <person name="Kanamori H."/>
            <person name="McCombie W.R."/>
            <person name="Ouyang S."/>
            <person name="Schwartz D.C."/>
            <person name="Tanaka T."/>
            <person name="Wu J."/>
            <person name="Zhou S."/>
            <person name="Childs K.L."/>
            <person name="Davidson R.M."/>
            <person name="Lin H."/>
            <person name="Quesada-Ocampo L."/>
            <person name="Vaillancourt B."/>
            <person name="Sakai H."/>
            <person name="Lee S.S."/>
            <person name="Kim J."/>
            <person name="Numa H."/>
            <person name="Itoh T."/>
            <person name="Buell C.R."/>
            <person name="Matsumoto T."/>
        </authorList>
    </citation>
    <scope>GENOME REANNOTATION</scope>
    <source>
        <strain>cv. Nipponbare</strain>
    </source>
</reference>
<reference key="6">
    <citation type="journal article" date="2005" name="PLoS Biol.">
        <title>The genomes of Oryza sativa: a history of duplications.</title>
        <authorList>
            <person name="Yu J."/>
            <person name="Wang J."/>
            <person name="Lin W."/>
            <person name="Li S."/>
            <person name="Li H."/>
            <person name="Zhou J."/>
            <person name="Ni P."/>
            <person name="Dong W."/>
            <person name="Hu S."/>
            <person name="Zeng C."/>
            <person name="Zhang J."/>
            <person name="Zhang Y."/>
            <person name="Li R."/>
            <person name="Xu Z."/>
            <person name="Li S."/>
            <person name="Li X."/>
            <person name="Zheng H."/>
            <person name="Cong L."/>
            <person name="Lin L."/>
            <person name="Yin J."/>
            <person name="Geng J."/>
            <person name="Li G."/>
            <person name="Shi J."/>
            <person name="Liu J."/>
            <person name="Lv H."/>
            <person name="Li J."/>
            <person name="Wang J."/>
            <person name="Deng Y."/>
            <person name="Ran L."/>
            <person name="Shi X."/>
            <person name="Wang X."/>
            <person name="Wu Q."/>
            <person name="Li C."/>
            <person name="Ren X."/>
            <person name="Wang J."/>
            <person name="Wang X."/>
            <person name="Li D."/>
            <person name="Liu D."/>
            <person name="Zhang X."/>
            <person name="Ji Z."/>
            <person name="Zhao W."/>
            <person name="Sun Y."/>
            <person name="Zhang Z."/>
            <person name="Bao J."/>
            <person name="Han Y."/>
            <person name="Dong L."/>
            <person name="Ji J."/>
            <person name="Chen P."/>
            <person name="Wu S."/>
            <person name="Liu J."/>
            <person name="Xiao Y."/>
            <person name="Bu D."/>
            <person name="Tan J."/>
            <person name="Yang L."/>
            <person name="Ye C."/>
            <person name="Zhang J."/>
            <person name="Xu J."/>
            <person name="Zhou Y."/>
            <person name="Yu Y."/>
            <person name="Zhang B."/>
            <person name="Zhuang S."/>
            <person name="Wei H."/>
            <person name="Liu B."/>
            <person name="Lei M."/>
            <person name="Yu H."/>
            <person name="Li Y."/>
            <person name="Xu H."/>
            <person name="Wei S."/>
            <person name="He X."/>
            <person name="Fang L."/>
            <person name="Zhang Z."/>
            <person name="Zhang Y."/>
            <person name="Huang X."/>
            <person name="Su Z."/>
            <person name="Tong W."/>
            <person name="Li J."/>
            <person name="Tong Z."/>
            <person name="Li S."/>
            <person name="Ye J."/>
            <person name="Wang L."/>
            <person name="Fang L."/>
            <person name="Lei T."/>
            <person name="Chen C.-S."/>
            <person name="Chen H.-C."/>
            <person name="Xu Z."/>
            <person name="Li H."/>
            <person name="Huang H."/>
            <person name="Zhang F."/>
            <person name="Xu H."/>
            <person name="Li N."/>
            <person name="Zhao C."/>
            <person name="Li S."/>
            <person name="Dong L."/>
            <person name="Huang Y."/>
            <person name="Li L."/>
            <person name="Xi Y."/>
            <person name="Qi Q."/>
            <person name="Li W."/>
            <person name="Zhang B."/>
            <person name="Hu W."/>
            <person name="Zhang Y."/>
            <person name="Tian X."/>
            <person name="Jiao Y."/>
            <person name="Liang X."/>
            <person name="Jin J."/>
            <person name="Gao L."/>
            <person name="Zheng W."/>
            <person name="Hao B."/>
            <person name="Liu S.-M."/>
            <person name="Wang W."/>
            <person name="Yuan L."/>
            <person name="Cao M."/>
            <person name="McDermott J."/>
            <person name="Samudrala R."/>
            <person name="Wang J."/>
            <person name="Wong G.K.-S."/>
            <person name="Yang H."/>
        </authorList>
    </citation>
    <scope>NUCLEOTIDE SEQUENCE [LARGE SCALE GENOMIC DNA]</scope>
    <source>
        <strain>cv. Nipponbare</strain>
    </source>
</reference>
<protein>
    <recommendedName>
        <fullName>Probable metal-nicotianamine transporter YSL4</fullName>
    </recommendedName>
    <alternativeName>
        <fullName>Protein YELLOW STRIPE LIKE 4</fullName>
        <shortName>OsYSL4</shortName>
    </alternativeName>
</protein>
<evidence type="ECO:0000250" key="1"/>
<evidence type="ECO:0000255" key="2"/>
<evidence type="ECO:0000305" key="3"/>
<evidence type="ECO:0000312" key="4">
    <source>
        <dbReference type="EMBL" id="EEE63008.1"/>
    </source>
</evidence>
<organism>
    <name type="scientific">Oryza sativa subsp. japonica</name>
    <name type="common">Rice</name>
    <dbReference type="NCBI Taxonomy" id="39947"/>
    <lineage>
        <taxon>Eukaryota</taxon>
        <taxon>Viridiplantae</taxon>
        <taxon>Streptophyta</taxon>
        <taxon>Embryophyta</taxon>
        <taxon>Tracheophyta</taxon>
        <taxon>Spermatophyta</taxon>
        <taxon>Magnoliopsida</taxon>
        <taxon>Liliopsida</taxon>
        <taxon>Poales</taxon>
        <taxon>Poaceae</taxon>
        <taxon>BOP clade</taxon>
        <taxon>Oryzoideae</taxon>
        <taxon>Oryzeae</taxon>
        <taxon>Oryzinae</taxon>
        <taxon>Oryza</taxon>
        <taxon>Oryza sativa</taxon>
    </lineage>
</organism>
<sequence>MDASIGDPRLTSVEAAFEKNPLPGFSWLVTPRAMAVAVLLGIVFCFVGMRIQMMTGFVPALNMPVTVLSFFLLKVLARQLQKWRLTVVPFTRQENMFLITCVITCLNLAITGGFATALTGMGTIVAKTLADDLDPRDIIDYIPTGKLIIYFFLIGMAGVLSNIPLNQIMIIDYQLLFPTGSVIGHLINSFHTPEGAYIAKMQVMTIFKVFFGSFSWSIFQWFYSSGSGCGFSSFPTFGLELYKRRFYIDFSATYIGVGMMCPHIVNFGLLFGAIISWGFLYPYLETKHGEWYQTDSPSNLDGLNGYKVFISVTLIVTDGLINFLILVTSAAINFYHIRQQQQQTSGLASYISKNPSMNYDERKRIEMFLSSKIPMFVPVAAYVAWTAISMVAMPAMFDQIKYYHVGVLYLAIPVVGFCNTYATGLTDWSVSNTYAKFSPFIFAAWIARPGAIVASLLVSGITMASLHVSSQAMQDLKSAHMTLTSPRAMIAGQVFGVALSSVVSPCIFRAFEKAAKPGAPLGSKDSVYPCPYAGLYRAICIIGMGGVKGLPKYCVELCVIAVLVTIAIDALVLVSQLKGWRLHLYIPSMTVIALPFFAGSYFTLDMCLGGLLLLLWKKIDTMSAEILSAAVAAGLICGEGLFTLPSALLNMFKVLPPMCMKFLPSGQEVEVVDSFLNSSGGTVPKT</sequence>
<feature type="chain" id="PRO_0000363867" description="Probable metal-nicotianamine transporter YSL4">
    <location>
        <begin position="1"/>
        <end position="686"/>
    </location>
</feature>
<feature type="transmembrane region" description="Helical" evidence="2">
    <location>
        <begin position="27"/>
        <end position="47"/>
    </location>
</feature>
<feature type="transmembrane region" description="Helical" evidence="2">
    <location>
        <begin position="53"/>
        <end position="73"/>
    </location>
</feature>
<feature type="transmembrane region" description="Helical" evidence="2">
    <location>
        <begin position="96"/>
        <end position="116"/>
    </location>
</feature>
<feature type="transmembrane region" description="Helical" evidence="2">
    <location>
        <begin position="151"/>
        <end position="171"/>
    </location>
</feature>
<feature type="transmembrane region" description="Helical" evidence="2">
    <location>
        <begin position="203"/>
        <end position="223"/>
    </location>
</feature>
<feature type="transmembrane region" description="Helical" evidence="2">
    <location>
        <begin position="264"/>
        <end position="284"/>
    </location>
</feature>
<feature type="transmembrane region" description="Helical" evidence="2">
    <location>
        <begin position="308"/>
        <end position="328"/>
    </location>
</feature>
<feature type="transmembrane region" description="Helical" evidence="2">
    <location>
        <begin position="373"/>
        <end position="393"/>
    </location>
</feature>
<feature type="transmembrane region" description="Helical" evidence="2">
    <location>
        <begin position="405"/>
        <end position="425"/>
    </location>
</feature>
<feature type="transmembrane region" description="Helical" evidence="2">
    <location>
        <begin position="441"/>
        <end position="461"/>
    </location>
</feature>
<feature type="transmembrane region" description="Helical" evidence="2">
    <location>
        <begin position="488"/>
        <end position="508"/>
    </location>
</feature>
<feature type="transmembrane region" description="Helical" evidence="2">
    <location>
        <begin position="554"/>
        <end position="574"/>
    </location>
</feature>
<feature type="transmembrane region" description="Helical" evidence="2">
    <location>
        <begin position="596"/>
        <end position="616"/>
    </location>
</feature>
<feature type="transmembrane region" description="Helical" evidence="2">
    <location>
        <begin position="629"/>
        <end position="649"/>
    </location>
</feature>
<feature type="sequence conflict" description="In Ref. 1; BAE91884." evidence="3" ref="1">
    <original>L</original>
    <variation>P</variation>
    <location>
        <position position="186"/>
    </location>
</feature>
<dbReference type="EMBL" id="AB190914">
    <property type="protein sequence ID" value="BAE91884.1"/>
    <property type="molecule type" value="mRNA"/>
</dbReference>
<dbReference type="EMBL" id="AC121362">
    <property type="protein sequence ID" value="AAU10679.1"/>
    <property type="molecule type" value="Genomic_DNA"/>
</dbReference>
<dbReference type="EMBL" id="AP008211">
    <property type="protein sequence ID" value="BAF16946.1"/>
    <property type="molecule type" value="Genomic_DNA"/>
</dbReference>
<dbReference type="EMBL" id="AP014961">
    <property type="protein sequence ID" value="BAS93032.1"/>
    <property type="molecule type" value="Genomic_DNA"/>
</dbReference>
<dbReference type="EMBL" id="CM000142">
    <property type="protein sequence ID" value="EEE63008.1"/>
    <property type="molecule type" value="Genomic_DNA"/>
</dbReference>
<dbReference type="RefSeq" id="XP_015638895.1">
    <property type="nucleotide sequence ID" value="XM_015783409.1"/>
</dbReference>
<dbReference type="SMR" id="Q688S6"/>
<dbReference type="FunCoup" id="Q688S6">
    <property type="interactions" value="45"/>
</dbReference>
<dbReference type="STRING" id="39947.Q688S6"/>
<dbReference type="PaxDb" id="39947-Q688S6"/>
<dbReference type="EnsemblPlants" id="Os05t0252000-01">
    <property type="protein sequence ID" value="Os05t0252000-01"/>
    <property type="gene ID" value="Os05g0252000"/>
</dbReference>
<dbReference type="Gramene" id="Os05t0252000-01">
    <property type="protein sequence ID" value="Os05t0252000-01"/>
    <property type="gene ID" value="Os05g0252000"/>
</dbReference>
<dbReference type="KEGG" id="dosa:Os05g0252000"/>
<dbReference type="eggNOG" id="ENOG502QQ2H">
    <property type="taxonomic scope" value="Eukaryota"/>
</dbReference>
<dbReference type="HOGENOM" id="CLU_015477_2_0_1"/>
<dbReference type="InParanoid" id="Q688S6"/>
<dbReference type="OMA" id="IAMNAQV"/>
<dbReference type="OrthoDB" id="627262at2759"/>
<dbReference type="Proteomes" id="UP000000763">
    <property type="component" value="Chromosome 5"/>
</dbReference>
<dbReference type="Proteomes" id="UP000007752">
    <property type="component" value="Chromosome 5"/>
</dbReference>
<dbReference type="Proteomes" id="UP000059680">
    <property type="component" value="Chromosome 5"/>
</dbReference>
<dbReference type="GO" id="GO:0016020">
    <property type="term" value="C:membrane"/>
    <property type="evidence" value="ECO:0000318"/>
    <property type="project" value="GO_Central"/>
</dbReference>
<dbReference type="GO" id="GO:0035673">
    <property type="term" value="F:oligopeptide transmembrane transporter activity"/>
    <property type="evidence" value="ECO:0007669"/>
    <property type="project" value="InterPro"/>
</dbReference>
<dbReference type="InterPro" id="IPR004813">
    <property type="entry name" value="OPT"/>
</dbReference>
<dbReference type="InterPro" id="IPR045035">
    <property type="entry name" value="YSL-like"/>
</dbReference>
<dbReference type="NCBIfam" id="TIGR00728">
    <property type="entry name" value="OPT_sfam"/>
    <property type="match status" value="1"/>
</dbReference>
<dbReference type="PANTHER" id="PTHR31645:SF9">
    <property type="entry name" value="METAL-NICOTIANAMINE TRANSPORTER YSL4-RELATED"/>
    <property type="match status" value="1"/>
</dbReference>
<dbReference type="PANTHER" id="PTHR31645">
    <property type="entry name" value="OLIGOPEPTIDE TRANSPORTER YGL114W-RELATED"/>
    <property type="match status" value="1"/>
</dbReference>
<dbReference type="Pfam" id="PF03169">
    <property type="entry name" value="OPT"/>
    <property type="match status" value="1"/>
</dbReference>